<accession>C0RJI4</accession>
<organism>
    <name type="scientific">Brucella melitensis biotype 2 (strain ATCC 23457)</name>
    <dbReference type="NCBI Taxonomy" id="546272"/>
    <lineage>
        <taxon>Bacteria</taxon>
        <taxon>Pseudomonadati</taxon>
        <taxon>Pseudomonadota</taxon>
        <taxon>Alphaproteobacteria</taxon>
        <taxon>Hyphomicrobiales</taxon>
        <taxon>Brucellaceae</taxon>
        <taxon>Brucella/Ochrobactrum group</taxon>
        <taxon>Brucella</taxon>
    </lineage>
</organism>
<evidence type="ECO:0000255" key="1">
    <source>
        <dbReference type="HAMAP-Rule" id="MF_01307"/>
    </source>
</evidence>
<evidence type="ECO:0000305" key="2"/>
<gene>
    <name evidence="1" type="primary">rpsE</name>
    <name type="ordered locus">BMEA_A1261</name>
</gene>
<keyword id="KW-0687">Ribonucleoprotein</keyword>
<keyword id="KW-0689">Ribosomal protein</keyword>
<keyword id="KW-0694">RNA-binding</keyword>
<keyword id="KW-0699">rRNA-binding</keyword>
<comment type="function">
    <text evidence="1">With S4 and S12 plays an important role in translational accuracy.</text>
</comment>
<comment type="function">
    <text evidence="1">Located at the back of the 30S subunit body where it stabilizes the conformation of the head with respect to the body.</text>
</comment>
<comment type="subunit">
    <text evidence="1">Part of the 30S ribosomal subunit. Contacts proteins S4 and S8.</text>
</comment>
<comment type="domain">
    <text>The N-terminal domain interacts with the head of the 30S subunit; the C-terminal domain interacts with the body and contacts protein S4. The interaction surface between S4 and S5 is involved in control of translational fidelity.</text>
</comment>
<comment type="similarity">
    <text evidence="1">Belongs to the universal ribosomal protein uS5 family.</text>
</comment>
<feature type="chain" id="PRO_1000165444" description="Small ribosomal subunit protein uS5">
    <location>
        <begin position="1"/>
        <end position="186"/>
    </location>
</feature>
<feature type="domain" description="S5 DRBM" evidence="1">
    <location>
        <begin position="20"/>
        <end position="83"/>
    </location>
</feature>
<sequence>MAQRERNREERGREERDSEFVDKLVHINRVAKVVKGGRRFGFAALVVVGDQKGRVGFGHGKAREVPEAIRKATEAAKRDMIFVPLRSGRTLHHDVEGRHGAGKVLLRAAPAGKGIIAGGPMRAVFETLGVQDVVAKSLGSSNPYNMVRATFDALKHQMHPKDIAAQRGIKYSTLQARRHDVVGSEE</sequence>
<proteinExistence type="inferred from homology"/>
<dbReference type="EMBL" id="CP001488">
    <property type="protein sequence ID" value="ACO00992.1"/>
    <property type="molecule type" value="Genomic_DNA"/>
</dbReference>
<dbReference type="RefSeq" id="WP_002964345.1">
    <property type="nucleotide sequence ID" value="NC_012441.1"/>
</dbReference>
<dbReference type="SMR" id="C0RJI4"/>
<dbReference type="GeneID" id="93016456"/>
<dbReference type="KEGG" id="bmi:BMEA_A1261"/>
<dbReference type="HOGENOM" id="CLU_065898_2_2_5"/>
<dbReference type="Proteomes" id="UP000001748">
    <property type="component" value="Chromosome I"/>
</dbReference>
<dbReference type="GO" id="GO:0015935">
    <property type="term" value="C:small ribosomal subunit"/>
    <property type="evidence" value="ECO:0007669"/>
    <property type="project" value="InterPro"/>
</dbReference>
<dbReference type="GO" id="GO:0019843">
    <property type="term" value="F:rRNA binding"/>
    <property type="evidence" value="ECO:0007669"/>
    <property type="project" value="UniProtKB-UniRule"/>
</dbReference>
<dbReference type="GO" id="GO:0003735">
    <property type="term" value="F:structural constituent of ribosome"/>
    <property type="evidence" value="ECO:0007669"/>
    <property type="project" value="InterPro"/>
</dbReference>
<dbReference type="GO" id="GO:0006412">
    <property type="term" value="P:translation"/>
    <property type="evidence" value="ECO:0007669"/>
    <property type="project" value="UniProtKB-UniRule"/>
</dbReference>
<dbReference type="FunFam" id="3.30.160.20:FF:000001">
    <property type="entry name" value="30S ribosomal protein S5"/>
    <property type="match status" value="1"/>
</dbReference>
<dbReference type="FunFam" id="3.30.230.10:FF:000002">
    <property type="entry name" value="30S ribosomal protein S5"/>
    <property type="match status" value="1"/>
</dbReference>
<dbReference type="Gene3D" id="3.30.160.20">
    <property type="match status" value="1"/>
</dbReference>
<dbReference type="Gene3D" id="3.30.230.10">
    <property type="match status" value="1"/>
</dbReference>
<dbReference type="HAMAP" id="MF_01307_B">
    <property type="entry name" value="Ribosomal_uS5_B"/>
    <property type="match status" value="1"/>
</dbReference>
<dbReference type="InterPro" id="IPR020568">
    <property type="entry name" value="Ribosomal_Su5_D2-typ_SF"/>
</dbReference>
<dbReference type="InterPro" id="IPR000851">
    <property type="entry name" value="Ribosomal_uS5"/>
</dbReference>
<dbReference type="InterPro" id="IPR005712">
    <property type="entry name" value="Ribosomal_uS5_bac-type"/>
</dbReference>
<dbReference type="InterPro" id="IPR005324">
    <property type="entry name" value="Ribosomal_uS5_C"/>
</dbReference>
<dbReference type="InterPro" id="IPR013810">
    <property type="entry name" value="Ribosomal_uS5_N"/>
</dbReference>
<dbReference type="InterPro" id="IPR018192">
    <property type="entry name" value="Ribosomal_uS5_N_CS"/>
</dbReference>
<dbReference type="InterPro" id="IPR014721">
    <property type="entry name" value="Ribsml_uS5_D2-typ_fold_subgr"/>
</dbReference>
<dbReference type="NCBIfam" id="TIGR01021">
    <property type="entry name" value="rpsE_bact"/>
    <property type="match status" value="1"/>
</dbReference>
<dbReference type="PANTHER" id="PTHR48277">
    <property type="entry name" value="MITOCHONDRIAL RIBOSOMAL PROTEIN S5"/>
    <property type="match status" value="1"/>
</dbReference>
<dbReference type="PANTHER" id="PTHR48277:SF1">
    <property type="entry name" value="MITOCHONDRIAL RIBOSOMAL PROTEIN S5"/>
    <property type="match status" value="1"/>
</dbReference>
<dbReference type="Pfam" id="PF00333">
    <property type="entry name" value="Ribosomal_S5"/>
    <property type="match status" value="1"/>
</dbReference>
<dbReference type="Pfam" id="PF03719">
    <property type="entry name" value="Ribosomal_S5_C"/>
    <property type="match status" value="1"/>
</dbReference>
<dbReference type="SUPFAM" id="SSF54768">
    <property type="entry name" value="dsRNA-binding domain-like"/>
    <property type="match status" value="1"/>
</dbReference>
<dbReference type="SUPFAM" id="SSF54211">
    <property type="entry name" value="Ribosomal protein S5 domain 2-like"/>
    <property type="match status" value="1"/>
</dbReference>
<dbReference type="PROSITE" id="PS00585">
    <property type="entry name" value="RIBOSOMAL_S5"/>
    <property type="match status" value="1"/>
</dbReference>
<dbReference type="PROSITE" id="PS50881">
    <property type="entry name" value="S5_DSRBD"/>
    <property type="match status" value="1"/>
</dbReference>
<protein>
    <recommendedName>
        <fullName evidence="1">Small ribosomal subunit protein uS5</fullName>
    </recommendedName>
    <alternativeName>
        <fullName evidence="2">30S ribosomal protein S5</fullName>
    </alternativeName>
</protein>
<reference key="1">
    <citation type="submission" date="2009-03" db="EMBL/GenBank/DDBJ databases">
        <title>Brucella melitensis ATCC 23457 whole genome shotgun sequencing project.</title>
        <authorList>
            <person name="Setubal J.C."/>
            <person name="Boyle S."/>
            <person name="Crasta O.R."/>
            <person name="Gillespie J.J."/>
            <person name="Kenyon R.W."/>
            <person name="Lu J."/>
            <person name="Mane S."/>
            <person name="Nagrani S."/>
            <person name="Shallom J.M."/>
            <person name="Shallom S."/>
            <person name="Shukla M."/>
            <person name="Snyder E.E."/>
            <person name="Sobral B.W."/>
            <person name="Wattam A.R."/>
            <person name="Will R."/>
            <person name="Williams K."/>
            <person name="Yoo H."/>
            <person name="Munk C."/>
            <person name="Tapia R."/>
            <person name="Han C."/>
            <person name="Detter J.C."/>
            <person name="Bruce D."/>
            <person name="Brettin T.S."/>
        </authorList>
    </citation>
    <scope>NUCLEOTIDE SEQUENCE [LARGE SCALE GENOMIC DNA]</scope>
    <source>
        <strain>ATCC 23457</strain>
    </source>
</reference>
<name>RS5_BRUMB</name>